<evidence type="ECO:0000255" key="1"/>
<evidence type="ECO:0000255" key="2">
    <source>
        <dbReference type="PROSITE-ProRule" id="PRU00258"/>
    </source>
</evidence>
<evidence type="ECO:0000256" key="3">
    <source>
        <dbReference type="SAM" id="MobiDB-lite"/>
    </source>
</evidence>
<evidence type="ECO:0000269" key="4">
    <source>
    </source>
</evidence>
<evidence type="ECO:0000269" key="5">
    <source>
    </source>
</evidence>
<evidence type="ECO:0000269" key="6">
    <source>
    </source>
</evidence>
<evidence type="ECO:0000269" key="7">
    <source>
    </source>
</evidence>
<evidence type="ECO:0000303" key="8">
    <source>
    </source>
</evidence>
<evidence type="ECO:0000303" key="9">
    <source>
    </source>
</evidence>
<evidence type="ECO:0000303" key="10">
    <source>
    </source>
</evidence>
<evidence type="ECO:0000305" key="11"/>
<evidence type="ECO:0000305" key="12">
    <source>
    </source>
</evidence>
<name>SIMA_TOLIN</name>
<feature type="chain" id="PRO_0000460191" description="Cyclosporin synthetase simA">
    <location>
        <begin position="1"/>
        <end position="15281"/>
    </location>
</feature>
<feature type="domain" description="Carrier 1" evidence="2">
    <location>
        <begin position="1026"/>
        <end position="1100"/>
    </location>
</feature>
<feature type="domain" description="Carrier 2" evidence="2">
    <location>
        <begin position="2524"/>
        <end position="2598"/>
    </location>
</feature>
<feature type="domain" description="Carrier 3" evidence="2">
    <location>
        <begin position="4011"/>
        <end position="4085"/>
    </location>
</feature>
<feature type="domain" description="Carrier 4" evidence="2">
    <location>
        <begin position="5503"/>
        <end position="5577"/>
    </location>
</feature>
<feature type="domain" description="Carrier 5" evidence="2">
    <location>
        <begin position="7000"/>
        <end position="7074"/>
    </location>
</feature>
<feature type="domain" description="Carrier 6" evidence="2">
    <location>
        <begin position="8060"/>
        <end position="8134"/>
    </location>
</feature>
<feature type="domain" description="Carrier 7" evidence="2">
    <location>
        <begin position="9555"/>
        <end position="9629"/>
    </location>
</feature>
<feature type="domain" description="Carrier 8" evidence="2">
    <location>
        <begin position="11052"/>
        <end position="11126"/>
    </location>
</feature>
<feature type="domain" description="Carrier 9" evidence="2">
    <location>
        <begin position="12124"/>
        <end position="12198"/>
    </location>
</feature>
<feature type="domain" description="Carrier 10" evidence="2">
    <location>
        <begin position="13620"/>
        <end position="13694"/>
    </location>
</feature>
<feature type="domain" description="Carrier 11" evidence="2">
    <location>
        <begin position="14695"/>
        <end position="14769"/>
    </location>
</feature>
<feature type="region of interest" description="Condensation 1" evidence="1 12">
    <location>
        <begin position="34"/>
        <end position="463"/>
    </location>
</feature>
<feature type="region of interest" description="Adenylation 1" evidence="1 12">
    <location>
        <begin position="513"/>
        <end position="918"/>
    </location>
</feature>
<feature type="region of interest" description="Condensation 2" evidence="1 12">
    <location>
        <begin position="1118"/>
        <end position="1549"/>
    </location>
</feature>
<feature type="region of interest" description="Adenylation 2" evidence="1 12">
    <location>
        <begin position="1599"/>
        <end position="2004"/>
    </location>
</feature>
<feature type="region of interest" description="Methyltransferase (M) domain 1" evidence="1 12">
    <location>
        <begin position="2067"/>
        <end position="2251"/>
    </location>
</feature>
<feature type="region of interest" description="Condensation 3" evidence="1 12">
    <location>
        <begin position="2616"/>
        <end position="3044"/>
    </location>
</feature>
<feature type="region of interest" description="Adenylation 3" evidence="1 12">
    <location>
        <begin position="3096"/>
        <end position="3498"/>
    </location>
</feature>
<feature type="region of interest" description="Methyltransferase (M) domain 2" evidence="1 12">
    <location>
        <begin position="3562"/>
        <end position="3749"/>
    </location>
</feature>
<feature type="region of interest" description="Condensation 4" evidence="1 12">
    <location>
        <begin position="4100"/>
        <end position="4530"/>
    </location>
</feature>
<feature type="region of interest" description="Adenylation 4" evidence="1 12">
    <location>
        <begin position="4582"/>
        <end position="4986"/>
    </location>
</feature>
<feature type="region of interest" description="Methyltransferase (M) domain 3" evidence="1 12">
    <location>
        <begin position="5052"/>
        <end position="5241"/>
    </location>
</feature>
<feature type="region of interest" description="Condensation 5" evidence="1 12">
    <location>
        <begin position="5592"/>
        <end position="6023"/>
    </location>
</feature>
<feature type="region of interest" description="Adenylation 5" evidence="1 12">
    <location>
        <begin position="6075"/>
        <end position="6478"/>
    </location>
</feature>
<feature type="region of interest" description="Methyltransferase (M) domain 4" evidence="1 12">
    <location>
        <begin position="6545"/>
        <end position="6729"/>
    </location>
</feature>
<feature type="region of interest" description="Condensation 6" evidence="1 12">
    <location>
        <begin position="7092"/>
        <end position="7517"/>
    </location>
</feature>
<feature type="region of interest" description="Adenylation 6" evidence="1 12">
    <location>
        <begin position="7572"/>
        <end position="7976"/>
    </location>
</feature>
<feature type="region of interest" description="Condensation 7" evidence="1 12">
    <location>
        <begin position="8152"/>
        <end position="8582"/>
    </location>
</feature>
<feature type="region of interest" description="Adenylation 7" evidence="1 12">
    <location>
        <begin position="8633"/>
        <end position="9038"/>
    </location>
</feature>
<feature type="region of interest" description="Methyltransferase (M) domain 5" evidence="1 12">
    <location>
        <begin position="9111"/>
        <end position="9288"/>
    </location>
</feature>
<feature type="region of interest" description="Condensation 8" evidence="1 12">
    <location>
        <begin position="9647"/>
        <end position="10077"/>
    </location>
</feature>
<feature type="region of interest" description="Adenylation 8" evidence="1 12">
    <location>
        <begin position="10127"/>
        <end position="10529"/>
    </location>
</feature>
<feature type="region of interest" description="Methyltransferase (M) domain 6" evidence="1 12">
    <location>
        <begin position="10588"/>
        <end position="10768"/>
    </location>
</feature>
<feature type="region of interest" description="Condensation 9" evidence="1 12">
    <location>
        <begin position="11144"/>
        <end position="11567"/>
    </location>
</feature>
<feature type="region of interest" description="Adenylation 9" evidence="1 12">
    <location>
        <begin position="11616"/>
        <end position="12019"/>
    </location>
</feature>
<feature type="region of interest" description="Condensation 10" evidence="1 12">
    <location>
        <begin position="12216"/>
        <end position="12645"/>
    </location>
</feature>
<feature type="region of interest" description="Adenylation 10" evidence="1 12">
    <location>
        <begin position="12696"/>
        <end position="13096"/>
    </location>
</feature>
<feature type="region of interest" description="Methyltransferase (M) domain 7" evidence="1 12">
    <location>
        <begin position="13162"/>
        <end position="13343"/>
    </location>
</feature>
<feature type="region of interest" description="Condensation 11" evidence="1 12">
    <location>
        <begin position="13710"/>
        <end position="14143"/>
    </location>
</feature>
<feature type="region of interest" description="Adenylation 11" evidence="1 12">
    <location>
        <begin position="14194"/>
        <end position="14598"/>
    </location>
</feature>
<feature type="region of interest" description="Condensation 12" evidence="1 12">
    <location>
        <begin position="14814"/>
        <end position="15158"/>
    </location>
</feature>
<feature type="region of interest" description="Disordered" evidence="3">
    <location>
        <begin position="15169"/>
        <end position="15224"/>
    </location>
</feature>
<feature type="compositionally biased region" description="Low complexity" evidence="3">
    <location>
        <begin position="15173"/>
        <end position="15211"/>
    </location>
</feature>
<feature type="compositionally biased region" description="Polar residues" evidence="3">
    <location>
        <begin position="15213"/>
        <end position="15224"/>
    </location>
</feature>
<feature type="modified residue" description="O-(pantetheine 4'-phosphoryl)serine" evidence="2">
    <location>
        <position position="1060"/>
    </location>
</feature>
<feature type="modified residue" description="O-(pantetheine 4'-phosphoryl)serine" evidence="2">
    <location>
        <position position="2558"/>
    </location>
</feature>
<feature type="modified residue" description="O-(pantetheine 4'-phosphoryl)serine" evidence="2">
    <location>
        <position position="4045"/>
    </location>
</feature>
<feature type="modified residue" description="O-(pantetheine 4'-phosphoryl)serine" evidence="2">
    <location>
        <position position="5537"/>
    </location>
</feature>
<feature type="modified residue" description="O-(pantetheine 4'-phosphoryl)serine" evidence="2">
    <location>
        <position position="7034"/>
    </location>
</feature>
<feature type="modified residue" description="O-(pantetheine 4'-phosphoryl)serine" evidence="2">
    <location>
        <position position="8094"/>
    </location>
</feature>
<feature type="modified residue" description="O-(pantetheine 4'-phosphoryl)serine" evidence="2">
    <location>
        <position position="9589"/>
    </location>
</feature>
<feature type="modified residue" description="O-(pantetheine 4'-phosphoryl)serine" evidence="2">
    <location>
        <position position="11086"/>
    </location>
</feature>
<feature type="modified residue" description="O-(pantetheine 4'-phosphoryl)serine" evidence="2">
    <location>
        <position position="12158"/>
    </location>
</feature>
<feature type="modified residue" description="O-(pantetheine 4'-phosphoryl)serine" evidence="2">
    <location>
        <position position="13654"/>
    </location>
</feature>
<feature type="modified residue" description="O-(pantetheine 4'-phosphoryl)serine" evidence="2">
    <location>
        <position position="14729"/>
    </location>
</feature>
<comment type="function">
    <text evidence="4 6 7">Nonribosomal peptide synthetase; part of the gene cluster that mediates the biosynthesis of the cycloundecapeptide cyclosporin A (CsA), a compound with antifungal activity used as an immunosuppressant drug (PubMed:30279281, PubMed:7874740, PubMed:8001164). Cyclosporin A contains three non-proteinogenic amino acids: D-alanine, alpha-amino butyric acid and the unusual amino acid (4R)-4-[(E)-2-butenyl]-4-methyl-l-threonine (Bmt) (PubMed:30279281, PubMed:8001164). The nonribosomal peptide synthetase (NRPS) catalyzes the elongation and cyclization of the undecapeptide chain (PubMed:30279281). SimA contains 11 modules responsible for sequential uptake of substrates and chain elongation. In addition to the core condensation-adenylation-thiolation (C-A-T) domains present in each module, seven modules contain an additional N-methylation (M) domain (modules 2, 3, 4, 5, 7, 8, and 10). The terminal C domain (C12 or Ct) is implicated in cyclization of the peptidyl chains to form CsA. The first module (A1) takes up D-Ala which is provided by the alanine racemase simB. The A2, A3, A8, and A10 domains have the same substrate-specific signature for recognition of leucine residues. The unusual amino acid (4R)-4-[(E)-2-butenyl]-4-methyl-l-threonine (Bmt) is recognized by the fifth module (A5). The A11 domain recognizes L-Ala (PubMed:30279281). The PKS simG mediates the biosynthesis of 3R-hydroxyl-4R-methyl-6E-octenoic acid from acetyl coenzyme A (acetyl-CoA), malonyl-CoA, and S-adenosylmethionine, and 3R-hydroxyl-4R-methyl-6E-octenoic acid is then be repeatedly oxidized by simI to 3R-hydroxy-4R-methyl-2-keto-6E-octenoic acid. The latter is likely converted to Bmt through the action of the aminotransferase SimJ (PubMed:30279281).</text>
</comment>
<comment type="cofactor">
    <cofactor evidence="2">
        <name>pantetheine 4'-phosphate</name>
        <dbReference type="ChEBI" id="CHEBI:47942"/>
    </cofactor>
</comment>
<comment type="induction">
    <text evidence="4">Expression is positively regulated by the cluster-specific transcription factor simL.</text>
</comment>
<comment type="domain">
    <text evidence="12">NRP synthetases are composed of discrete domains (adenylation (A), thiolation (T) or peptidyl carrier protein (PCP) and condensation (C) domains) which when grouped together are referred to as a single module. Each module is responsible for the recognition (via the A domain) and incorporation of a single amino acid into the growing peptide product. Thus, an NRP synthetase is generally composed of one or more modules and can terminate in a thioesterase domain (TE) that releases the newly synthesized peptide from the enzyme. Occasionally, methyltransferase domains (M), responsible for amino acid methylation, are present within the NRP synthetase. SimA has the following 11 modules architecture: C1-A1-T1-C2-A2-M2-T2-C3-A3-M3-T3-C4-A4-M4-T4-C5-A5-M5-T5-C6-A6-T6-C7-A7-M7-T7-C8-A8-M8-T8-C9-A9-T9-C10-A10-M10-T10-C11-A11-T11-Ct.</text>
</comment>
<comment type="disruption phenotype">
    <text evidence="4 6">Impairs the production of cyclosporins (PubMed:30279281, PubMed:7874740). Decreases virulence in an infection model of larvae of wax moth (Galleria mellonella) (PubMed:30279281).</text>
</comment>
<comment type="biotechnology">
    <text evidence="5">Cyclosporin A (CsA) was developed and approved as an immunosuppressant drug used in organ transplantation in 1983, and more than 30 analogs of CsA have been identified with different biological activities, including immunosuppressive, antifungal, antiviral, and antiparasitic properties.</text>
</comment>
<comment type="similarity">
    <text evidence="11">Belongs to the NRP synthetase family.</text>
</comment>
<reference key="1">
    <citation type="journal article" date="1994" name="Curr. Genet.">
        <title>The peptide synthetase catalyzing cyclosporine production in Tolypocladium niveum is encoded by a giant 45.8-kilobase open reading frame.</title>
        <authorList>
            <person name="Weber G."/>
            <person name="Schorgendorfer K."/>
            <person name="Schneider-Scherzer E."/>
            <person name="Leitner E."/>
        </authorList>
    </citation>
    <scope>NUCLEOTIDE SEQUENCE [GENOMIC DNA]</scope>
    <scope>FUNCTION</scope>
    <source>
        <strain>ATCC34921</strain>
    </source>
</reference>
<reference key="2">
    <citation type="journal article" date="1994" name="Agents Actions">
        <title>Biological effects of cyclosporin A: a new antilymphocytic agent. 1976.</title>
        <authorList>
            <person name="Borel J.F."/>
            <person name="Feurer C."/>
            <person name="Gubler H.U."/>
            <person name="Staehelin H."/>
        </authorList>
    </citation>
    <scope>BIOTECHNOLOGY</scope>
</reference>
<reference key="3">
    <citation type="journal article" date="1994" name="Curr. Genet.">
        <title>Disruption of the cyclosporin synthetase gene of Tolypocladium niveum.</title>
        <authorList>
            <person name="Weber G."/>
            <person name="Leitner E."/>
        </authorList>
    </citation>
    <scope>FUNCTION</scope>
    <scope>DISRUPTION PHENOTYPE</scope>
</reference>
<reference key="4">
    <citation type="journal article" date="2018" name="MBio">
        <title>Cyclosporine biosynthesis in Tolypocladium inflatum benefits fungal adaptation to the environment.</title>
        <authorList>
            <person name="Yang X."/>
            <person name="Feng P."/>
            <person name="Yin Y."/>
            <person name="Bushley K."/>
            <person name="Spatafora J.W."/>
            <person name="Wang C."/>
        </authorList>
    </citation>
    <scope>FUNCTION</scope>
    <scope>DISRUPTION PHENOTYPE</scope>
    <scope>INDUCTION</scope>
</reference>
<organism>
    <name type="scientific">Tolypocladium inflatum</name>
    <name type="common">Cyclosporin fungus</name>
    <name type="synonym">Tolypocladium niveum</name>
    <dbReference type="NCBI Taxonomy" id="29910"/>
    <lineage>
        <taxon>Eukaryota</taxon>
        <taxon>Fungi</taxon>
        <taxon>Dikarya</taxon>
        <taxon>Ascomycota</taxon>
        <taxon>Pezizomycotina</taxon>
        <taxon>Sordariomycetes</taxon>
        <taxon>Hypocreomycetidae</taxon>
        <taxon>Hypocreales</taxon>
        <taxon>Ophiocordycipitaceae</taxon>
        <taxon>Tolypocladium</taxon>
    </lineage>
</organism>
<proteinExistence type="evidence at protein level"/>
<gene>
    <name evidence="8" type="primary">simA</name>
</gene>
<dbReference type="EC" id="2.1.1.-" evidence="12"/>
<dbReference type="EC" id="6.3.2.-" evidence="12"/>
<dbReference type="EMBL" id="Z28383">
    <property type="protein sequence ID" value="CAA82227.1"/>
    <property type="molecule type" value="Genomic_DNA"/>
</dbReference>
<dbReference type="PIR" id="S45487">
    <property type="entry name" value="S41309"/>
</dbReference>
<dbReference type="MINT" id="Q09164"/>
<dbReference type="BioCyc" id="MetaCyc:MONOMER-124408"/>
<dbReference type="GO" id="GO:0005737">
    <property type="term" value="C:cytoplasm"/>
    <property type="evidence" value="ECO:0007669"/>
    <property type="project" value="TreeGrafter"/>
</dbReference>
<dbReference type="GO" id="GO:0016874">
    <property type="term" value="F:ligase activity"/>
    <property type="evidence" value="ECO:0007669"/>
    <property type="project" value="UniProtKB-KW"/>
</dbReference>
<dbReference type="GO" id="GO:0008168">
    <property type="term" value="F:methyltransferase activity"/>
    <property type="evidence" value="ECO:0007669"/>
    <property type="project" value="UniProtKB-KW"/>
</dbReference>
<dbReference type="GO" id="GO:0031177">
    <property type="term" value="F:phosphopantetheine binding"/>
    <property type="evidence" value="ECO:0007669"/>
    <property type="project" value="InterPro"/>
</dbReference>
<dbReference type="GO" id="GO:0043041">
    <property type="term" value="P:amino acid activation for nonribosomal peptide biosynthetic process"/>
    <property type="evidence" value="ECO:0007669"/>
    <property type="project" value="TreeGrafter"/>
</dbReference>
<dbReference type="GO" id="GO:0032259">
    <property type="term" value="P:methylation"/>
    <property type="evidence" value="ECO:0007669"/>
    <property type="project" value="UniProtKB-KW"/>
</dbReference>
<dbReference type="GO" id="GO:0044550">
    <property type="term" value="P:secondary metabolite biosynthetic process"/>
    <property type="evidence" value="ECO:0007669"/>
    <property type="project" value="TreeGrafter"/>
</dbReference>
<dbReference type="CDD" id="cd05930">
    <property type="entry name" value="A_NRPS"/>
    <property type="match status" value="11"/>
</dbReference>
<dbReference type="CDD" id="cd02440">
    <property type="entry name" value="AdoMet_MTases"/>
    <property type="match status" value="1"/>
</dbReference>
<dbReference type="CDD" id="cd19542">
    <property type="entry name" value="CT_NRPS-like"/>
    <property type="match status" value="1"/>
</dbReference>
<dbReference type="CDD" id="cd19531">
    <property type="entry name" value="LCL_NRPS-like"/>
    <property type="match status" value="11"/>
</dbReference>
<dbReference type="FunFam" id="3.30.300.30:FF:000084">
    <property type="entry name" value="Enniatin synthase"/>
    <property type="match status" value="7"/>
</dbReference>
<dbReference type="FunFam" id="3.30.559.30:FF:000001">
    <property type="entry name" value="Non-ribosomal peptide synthetase"/>
    <property type="match status" value="1"/>
</dbReference>
<dbReference type="FunFam" id="3.40.50.980:FF:000001">
    <property type="entry name" value="Non-ribosomal peptide synthetase"/>
    <property type="match status" value="4"/>
</dbReference>
<dbReference type="FunFam" id="3.30.300.30:FF:000015">
    <property type="entry name" value="Nonribosomal peptide synthase SidD"/>
    <property type="match status" value="3"/>
</dbReference>
<dbReference type="FunFam" id="1.10.1200.10:FF:000005">
    <property type="entry name" value="Nonribosomal peptide synthetase 1"/>
    <property type="match status" value="1"/>
</dbReference>
<dbReference type="Gene3D" id="3.30.300.30">
    <property type="match status" value="18"/>
</dbReference>
<dbReference type="Gene3D" id="3.40.50.980">
    <property type="match status" value="20"/>
</dbReference>
<dbReference type="Gene3D" id="1.10.1200.10">
    <property type="entry name" value="ACP-like"/>
    <property type="match status" value="11"/>
</dbReference>
<dbReference type="Gene3D" id="3.30.559.10">
    <property type="entry name" value="Chloramphenicol acetyltransferase-like domain"/>
    <property type="match status" value="12"/>
</dbReference>
<dbReference type="Gene3D" id="2.30.38.10">
    <property type="entry name" value="Luciferase, Domain 3"/>
    <property type="match status" value="10"/>
</dbReference>
<dbReference type="Gene3D" id="3.40.50.12780">
    <property type="entry name" value="N-terminal domain of ligase-like"/>
    <property type="match status" value="1"/>
</dbReference>
<dbReference type="Gene3D" id="3.30.559.30">
    <property type="entry name" value="Nonribosomal peptide synthetase, condensation domain"/>
    <property type="match status" value="12"/>
</dbReference>
<dbReference type="Gene3D" id="3.40.50.150">
    <property type="entry name" value="Vaccinia Virus protein VP39"/>
    <property type="match status" value="7"/>
</dbReference>
<dbReference type="InterPro" id="IPR010071">
    <property type="entry name" value="AA_adenyl_dom"/>
</dbReference>
<dbReference type="InterPro" id="IPR036736">
    <property type="entry name" value="ACP-like_sf"/>
</dbReference>
<dbReference type="InterPro" id="IPR025110">
    <property type="entry name" value="AMP-bd_C"/>
</dbReference>
<dbReference type="InterPro" id="IPR045851">
    <property type="entry name" value="AMP-bd_C_sf"/>
</dbReference>
<dbReference type="InterPro" id="IPR020845">
    <property type="entry name" value="AMP-binding_CS"/>
</dbReference>
<dbReference type="InterPro" id="IPR000873">
    <property type="entry name" value="AMP-dep_synth/lig_dom"/>
</dbReference>
<dbReference type="InterPro" id="IPR042099">
    <property type="entry name" value="ANL_N_sf"/>
</dbReference>
<dbReference type="InterPro" id="IPR023213">
    <property type="entry name" value="CAT-like_dom_sf"/>
</dbReference>
<dbReference type="InterPro" id="IPR001242">
    <property type="entry name" value="Condensatn"/>
</dbReference>
<dbReference type="InterPro" id="IPR020806">
    <property type="entry name" value="PKS_PP-bd"/>
</dbReference>
<dbReference type="InterPro" id="IPR009081">
    <property type="entry name" value="PP-bd_ACP"/>
</dbReference>
<dbReference type="InterPro" id="IPR006162">
    <property type="entry name" value="Ppantetheine_attach_site"/>
</dbReference>
<dbReference type="InterPro" id="IPR029063">
    <property type="entry name" value="SAM-dependent_MTases_sf"/>
</dbReference>
<dbReference type="NCBIfam" id="TIGR01733">
    <property type="entry name" value="AA-adenyl-dom"/>
    <property type="match status" value="11"/>
</dbReference>
<dbReference type="NCBIfam" id="NF003417">
    <property type="entry name" value="PRK04813.1"/>
    <property type="match status" value="18"/>
</dbReference>
<dbReference type="NCBIfam" id="NF004282">
    <property type="entry name" value="PRK05691.1"/>
    <property type="match status" value="22"/>
</dbReference>
<dbReference type="PANTHER" id="PTHR45527:SF1">
    <property type="entry name" value="FATTY ACID SYNTHASE"/>
    <property type="match status" value="1"/>
</dbReference>
<dbReference type="PANTHER" id="PTHR45527">
    <property type="entry name" value="NONRIBOSOMAL PEPTIDE SYNTHETASE"/>
    <property type="match status" value="1"/>
</dbReference>
<dbReference type="Pfam" id="PF00501">
    <property type="entry name" value="AMP-binding"/>
    <property type="match status" value="11"/>
</dbReference>
<dbReference type="Pfam" id="PF13193">
    <property type="entry name" value="AMP-binding_C"/>
    <property type="match status" value="3"/>
</dbReference>
<dbReference type="Pfam" id="PF00668">
    <property type="entry name" value="Condensation"/>
    <property type="match status" value="12"/>
</dbReference>
<dbReference type="Pfam" id="PF00550">
    <property type="entry name" value="PP-binding"/>
    <property type="match status" value="11"/>
</dbReference>
<dbReference type="SMART" id="SM00823">
    <property type="entry name" value="PKS_PP"/>
    <property type="match status" value="11"/>
</dbReference>
<dbReference type="SUPFAM" id="SSF56801">
    <property type="entry name" value="Acetyl-CoA synthetase-like"/>
    <property type="match status" value="11"/>
</dbReference>
<dbReference type="SUPFAM" id="SSF47336">
    <property type="entry name" value="ACP-like"/>
    <property type="match status" value="11"/>
</dbReference>
<dbReference type="SUPFAM" id="SSF52777">
    <property type="entry name" value="CoA-dependent acyltransferases"/>
    <property type="match status" value="24"/>
</dbReference>
<dbReference type="SUPFAM" id="SSF53335">
    <property type="entry name" value="S-adenosyl-L-methionine-dependent methyltransferases"/>
    <property type="match status" value="7"/>
</dbReference>
<dbReference type="PROSITE" id="PS00455">
    <property type="entry name" value="AMP_BINDING"/>
    <property type="match status" value="10"/>
</dbReference>
<dbReference type="PROSITE" id="PS50075">
    <property type="entry name" value="CARRIER"/>
    <property type="match status" value="11"/>
</dbReference>
<dbReference type="PROSITE" id="PS00012">
    <property type="entry name" value="PHOSPHOPANTETHEINE"/>
    <property type="match status" value="9"/>
</dbReference>
<accession>Q09164</accession>
<keyword id="KW-0436">Ligase</keyword>
<keyword id="KW-0489">Methyltransferase</keyword>
<keyword id="KW-0511">Multifunctional enzyme</keyword>
<keyword id="KW-0596">Phosphopantetheine</keyword>
<keyword id="KW-0597">Phosphoprotein</keyword>
<keyword id="KW-0677">Repeat</keyword>
<keyword id="KW-0808">Transferase</keyword>
<keyword id="KW-0843">Virulence</keyword>
<protein>
    <recommendedName>
        <fullName evidence="10">Cyclosporin synthetase simA</fullName>
        <shortName evidence="10">CYSYN</shortName>
        <ecNumber evidence="12">2.1.1.-</ecNumber>
        <ecNumber evidence="12">6.3.2.-</ecNumber>
    </recommendedName>
    <alternativeName>
        <fullName evidence="8">Cyclosporin biosynthesis cluster protein A</fullName>
    </alternativeName>
    <alternativeName>
        <fullName evidence="9">Nonribosomal peptide synthetase simA</fullName>
        <shortName evidence="9">NRPS simA</shortName>
    </alternativeName>
</protein>
<sequence length="15281" mass="1689067">MGAIGQDMAYDRLANPSRASSISSNRYSEPVEQSFAQGRLWFLHQLKLGASWDITPAAIRLRGHLDIDALNAASRALTQRHETLRTTFKEQDGVGVQVVHASGLERGLRIVDASSRDLAQLLAEEQTMKFDLESEPAWRVALLKVAEDHHILSIVVHHIISDSRSLDIIQQELGELYTAASQGKSISACPLGPIPIQYRDLTTWQNQDEQVAEQERQLGYWIEQLDNNTPAELLTELPRPAIPSGETGKISFQIDGSVHKELLAFCRSQQVTAYAVLLAAFRVAHFRLTGAEDATIGAPVANRDRPELENMVAPLATLQCMRVVLDEDDTFESVLRQIMSVMTEAHANRDVPFERIVSALLPGSTDTSRHPLVQLMFALHPAQDTGRARWGFLEAETLQSAAPTRFDMEMHLFEGDDRFDANVLFSTGLFDAEAIRSVVSIFREVLRRGISEPAVHVKTMPLTDGLAAIRDMGLLDIGTTDYPREASVVDMFQEQVALNPSATAVADASSRLSYSELDHKSDQLAAWLRRRQLKPETLIGVLSPPSCETMVSFLGILKAHLAYLPLDINVPLARIESILSAVDGHKLVLLGSNVPQPKVDVPDVELLRISDALNGSQVNGLAGKQATAKPSATDLAYVIFTSGSTGKPKGVMIEHRGIVRLVKGTNIISPAQAAVPTAHLANIAFDLSTWEIYTPILNGGTLVCIEHSVTLDSKALEAVFTKEGIRVAFLAPALIKQCLADRPAIFAGLDSLYAIGDRFDRRDALHAKSLVKHGVYNAYGPTENSVVSTIYSVSEASPFVTGVPVGRAISNSGAYVMDQDQQLVSPGVMGELVVSGDGLARGYTDSALDKNRFVVVQIDGESIRGYRTGDRARYSLKGGQIEFFGRMDQQVKIRGHRIEPAEVEHALLNSDQVRDAAVVIRRQEEEEPAMIAFVTTQGTLPDHLVNINGNGHVPDGNGSKNDQFAVHVESELRRRLQMLLPSYMMPARIVVLDHLPLNPNGKVDRKALGQSAKTVQKSKLVSQRVAPRNEIEAVLCEEYRSVLGVEVGITDNFFDLGGHSLTAMKLAARISQRLDIQASVATVFEQPMLADLAATIQRGSTLYSVIPTTEYTGPVEQSFAQGRLWFLEQLNTGASWYNVMLTVRLRGHLDVDALGTALLALEKRHETLRTTFEERDGVGMQVVHSSLMGELRLIDISEKSGTAAHEALMKEQSTRFDLTREPGWRVALLKLADHHIFSIVMHHIVSDGWSLDLLRHELGQLYSAALRGQDPLSRLEPLPIQYRDFAVWQKQDSQQKAAHQRQLEYWTKQLADSTPAELLTDFPRPSILSGKAGKVPVAIEGSLYDTLQVFSRTHQVTSFAVLLAAFRAAHFRLTGSDNATIGVPSANRNRPELENVIGFFVNTQCIRITIDENDNFESLVRQVRSTTTAAQDNQDVPFEQVVSSLMPSSSRDASRNPLVQLMFALHGQQDLFKIQLEGTEEEVIPTEEVTRFDIEFHLYQGASKLSGDIIFAADLFEAETIRGVVSVFQEVLRRGLQQPQTPIMTMPLTDGIPELERMGLLHMVKTDYPRNMSVVDVFQQQVRLSAEATAVIDSSSRMSYAELDQRSDQVAAWLRQRQLPAETFVAVLAPRSCEAVIALFGILKAGHAYLPLDVNVPAARLRAILAEVKGEKLVLLGAGEPSPEGQSPEVSIVRIADATSPAGHASLRDGKSKPTAGSLAYVIFTSGSTGKPKGVMIEHRGVLRLVKQTNILSSLPPAQTFRMAHMSNLAFDASIWEVFTALLNGGSLVCIDRFTILDAQALEALFLREHINIALFPPALLKQCLTDAAATIKSLDLLYVGGDRLDTADAALAKALVKSEVYNAYGPTENTVMSTLYSIADTERFVNGVPIGRAVSNSGVYVMDQNQQLVPLGVMGELVVTGDGLARGYTNPALDSDRFVDVIARGQLLRAYRTGDRARYRPKDGQVEFFGRMDHQVKVRGHRIELAEVEHALLSSAGVHDAVVVSNSQEDNQGVEMVAFITAQDNETLQEAQSSNQVQEWESHFETTAYADITAIDQNTLGRDFTSWTSMYDGTLIDKREMQEWLDDTMRTFLDGQAAGHVLEIGTGTGMVLFNLGQAGLKSYIGLEPSQSAVQFVNKAAQTFPGLEGKAQVHVGTAMDTGRLSALSPDLIVINSVAQYFPSREYLAEVVEALVRIPGVRRIFFGDMRTYATHKDFLVARAVHTNGSKVTRSKVQQEVARLEELEEELLVDPAFFTSLKESLSEEIEHVEILPKNMKVNNELSSYRYGAVLHIRNHNQNQSRSIHKINAESWIDFASSQMDRQGLARLLKENKDAESIAVFNIPYSKTIVERHIAKSLADDHDGDDTHSSIDGVAWISAAREKASQCPSLDVHDLVQLAEDAGFRVEVSWARQRSQNGALDVFFHHFQPTENESRALVDFPTDYKGQQARSLTNRPLQRVESRRIEAQVREQLQVLLPAYMIPARIVVLQNMPLNTSGKVDRKELTLRAKVTAARTPSSELVAPRDSIEAIICKEFKDVLGVEVGITDNFFNVGGHSLLATKLAARLSRQLNAQIAVKDIFDRPVIADLAATIQQDTTEHNPILPTSYTGPVEQSFAQGRLWFLDQLNVGATWYLMPFAVRLRGPLVVSALAAALLALEERHETLRTTFIEQEGIGMQVIHPFAPKELRVIDVSGEEESTIQKILEKEQTTPFNLASEPGFRLALLKTGEDEHILSTVMHHAISDGWSVDIFQQEIGQFYSAILRGHDPLAQIAPLSIQYRDFATWQRQIFQVAEHRRQLAYWTKQLADNKPAELLTDFKRPPMLSGRAGEIPVVVDGLIYEKLQDFCRIRQVTAFTVLLAAFRAAHYRMTGTEDATIGTPIANRNRPELEGLIGFFVNTQCMRITVDVEDSFETLVHQVRETTLAAHANQDVPFEQIVSNILPGSSDTSRNPLVQLMFALHSQQNLGKVRLEGIEEEIISIAETTRFDIEFHLYQEAERLNGSIVYAADLFVPETIQSVITIFQGILQKGLGEPDMPVASMALDGGLESLRSTGLLHPQQTDYPCDASVVQIFKQQVAVNPDVIAVRDESTRLSYADLDRKSDQVACWLSRRGIAPETFVAILAPRSCETIVAILGVLKANLAYLPLDVNVPASRLEAILSEVSGSMLVLVGAETPIPEGMAEAETIRITEILADAKTDDINGLAASQPTAASLAYVIFTSGSTGRPKGVMVEHRGIVRLTKQTNITSKLPESFHMAHISNLAFDASVWEVFTTLLNGGTLVCIDYFTLLESTALEKVFFDQRVNVALLPPALLKQCLDNSPALVKTLSVLYIGGDRLDASDAAKARGLVQTQAFNAYGPTENTVMSTIYPIAEDPFINGVPIGHAVSNSGAFVMDQNQQITPPGAMGELIVTGDGLARGYTTSSLNTGRFINVDIDGEQVRAYRTGDRVRYRPKDLQIEFFGRIDHQVKIRGHRIEPAEVEYALLSHDLVTDAAVVTHSQENQDLEMVGFVAARVADVREDESSNQVQEWQTHFDSIAYADITTIDQQSLGRDFMSWTSMYDGSLIKKSQMQEWLDDTMRSLLDSQPPGHVLEVGTGTGMVLFNLGREGGLQSYVGLEPSPSATAFVNKAAKSFPGLEDRIRVEVGTATDIDRLGDDLHAGLVVVNSVAQYFPSQDYLAQLVRDLTKVPGVERIFFGDMRSHAINRDFLVARAVHALGDKATKAEIQREVVRMEESEDELLVDPAFFTSLTTQVENIKHVEILPKRMRATNELSSYRYAAVLHVNDLAKPAHKVSPGAWVDFAATKMDRDALIRLLRGTKISDHIAIANIPNSKTIVERTICESVYDLGGDAKDSNDRVSWLSAARSNAVKVASLSAIDLVDIAQEAGFRVEISCARQWSQNGALDAVFHHLGPSPQSSHVLIDFLTDHQGRPEEALTNHPLHRAQSRRVERQIRERLQTLLPAYMIPAQIMVLDKLPLNANGKVDRKQLTQRAQTVPKAKQVSAPVAPRTEIERVLCQEFSDVLGVDIGIMENFFDLGGHSLMATKLAARISRRLETHVSVKEIFDHPRVCDLVLIVQQGSAPHDPIVSTKYTGPVPQSFAQGRLWFLDQLNFGATWYLMPLAVRLRGAMNVHALTAALLALERRHELLRTTFYEQNGVGMQKVNPVVTETLRIIDLSNGDGDYLPTLKKEQTAPFHLETEPGWRVALLRLGPGDYILSVVMHHIISDGWSVDVLFQELGQFYSTAVKGHDPLSQTTPLPIHYRDFALWQKKPTQESEHERQLQYWVEQLVDSAPAELLTDLPRPSILSGQAGEMSVTIEGALYKNLEEFCRVHRVTSFVVLLAALRAAHYRLTGSEDATIGTPIANRNRPELEQIIGFFVNTQCIRITVNEDETFESLVQQVRSTATAAFAHQDVPFEKIVSTLLPGSRDASRNPLVQLMFAVHSQKNLGELKLENAHSEVVPTEITTRFDLEFHLFQQDDKLEGSILYSTDLFEAVSVQSLLSVFQEILRRGLNGPDVPISTLPLQDGIVDLQRQGLLDVQKTEYPRDSSVVDVFHEQVSINPDSIALIHGSEKLSYAQLDRESDRVARWLRHRSFSSDTLIAVLAPRSCETIIAFLGILKANLAYLPLDVKAPAARIDAIVSSLPGNKLILLGANVTPPKLQEAAIDFVPIRDTFTTLTDGTLQDGPTIERPSAQSLAYAMFTSGSTGRPKGVMVQHRNIVRLVKNSNVVAKQPAAARIAHISNLAFDASSWEIYAPLLNGGAIVCADYFTTIDPQALQETFQEHEIRGAMLPPSLLKQCLVQAPDMISRLDILFAAGDRFSSVDALQAQRLVGSGVFNAYGPTENTILSTIYNVAENDSFVNGVPIGSAVSNSGAYIMDKNQQLVPAGVMGELVVTGDGLARGYMDPKLDADRFIQLTVNGSEQVRAYRTGDRVRYRPKDFQIEFFGRMDQQIKIRGHRIEPAEVEQAFLNDGFVEDVAIVIRTPENQEPEMVAFVTAKGDNSAREEEATTQIEGWEAHFEGGAYANIEEIESEALGYDFMGWTSMYDGTEIDKDEMREWLNDTMRSLLDGKPAGRVLEVGTGTGMIMFNLGRSQGLERYIGLEPAPSAAEFVNNAAKSFPGLAGRAEVHVGTAADVGTLQGLTSDMAVINSVAQYFPTPEYLAETIKSLVQVPGMKRIYLGDMRSWAMNRDFAAARAAYSLADNASKDRVRQKMMELEEKEEELLVDPAFFTALASQLQDRIQHVEILPKRMKATNELSSYRYAAVLHISDEPLPIYKIDPEAWINFEGSRLTREALAQVLKENENAESVAISNIPYSKTVVERHIVRSLDQEDANAPEESMDGSDWISAVRTRAQQCHTLSASDLFDIAEDAGFRVEVSWARQHSQHGALDAVFHHLKPATEDSRVLIKFPTDHQGRPLKSLTNQPLLPAQSRRAELLIREGLQTLLPPYMIPSQITLIDRMPLNANGKVDRRELARRAKITQKSKPVEDIVPPRNSVEATVCKGFTDVLGVEVGITDNFFNLGGHSLMATKLAARLGRQLNTRISVRDVFDQPVVADLAAVIQRNSAPHEPIKPADYTGPVPQSFAQGRLWFLDQLNVGATWYLMPLGIRLHGSLRVDALATAISALEQRHEPLRTTFHEEDGVGVQVVQDHRPKDLRIIDLSTQPKDAYLAVLKHEQTTLFDLATEPGWRVALIRLGEEEHILSIVMHHIISDGWSVEVLFDEMHRFYSSALRQQDPMEQILPLPIQYRDFAAWQKTEEQVAEHQRQLDYWTEHLADSTPAELLTDLPRPSILSGRANELPLTIEGRLHDKLRAFCRVHQATPFVILLAALRAAHYRLTGAEDATLGTPIANRNRPELENMIGFFVNTQCMRIAIEENDNFESLVRRVRSTATSAFANQDVPFESIVSSLLPGSRDASRNPLVQVILAVHSQQDLGKLTLEGLRDEAVDSAISTRFDVEFHLFEHADRLSGSVLYAKELFKLRTIESVVSVFLETLRRALDQPLTPLAVLPLTDGVGEIASKGLLDVPRTDYPRDANIVEVFQQHVRATPDAIAVKDATSILTYAQLDQQSDRLAIWLSRRHMMPETLVGVLAPRSCETIIAMFGIMKANLAYLPLDINSPAARLRSILSAVDGNKLVLLGSGVTAPEQENPEVEAVGIQEILAGTGLDKTQGSNARPSATSLAYVIFTSGSTGKPKGVMVEHRSVTRLAKPSNVISKLPQGARVAHLANIAFDASIWEIATTLLNGATLVCLDYHTVLDCRTLKEVFERESITVVTLMPALLKQCVAEIPETLAHLDLLYTGGDRVGGHDAMRARSLVKIGMFSGYGPTENTVISTIYEVDADEMFVNGVPIGKTVSNSGAYVMDRNQQLVPSGVVGELVVTGDGLARGYTDPSLNKNRFIYITVNGESIRAYRTGDRVRYRPHDLQIEFFGRMDQQVKIRGHRIEPGEVESALLSHNSVQDAAVVICAPADQDSGAEMVAFVAARNTEDEDTQEEEAVDQVQGWETHFETAAYSEVKDIRQSEVGNDFMGWTSMYDGSEIDKTDMHEWLNDTMRMILDAREPGHVLEIGTGTGMVMFNLAKCPGLQGYVGFEPSKSAAQFVNDAAQSFPALKDGRSIVHVGTATDINKAGPIQPRLVVINSVAQYFPTPEYLFRVVEALVQIPSVERIVFGDMRTNAINRDFVASRALHTLGEKANKRLVRQMIYELEANEEELLTDPAFFTSLRTRLGEKIKHVEILPKTMKATNELSKYRYAAVLHVRGSREQSTIHQVSPNAWIDFAADGLDRQTLINLLKEHKDAGTVAIGNIPYSKTIVERFVNKSLSEDDMEEGQNSLDGSAWVAAVRMAAQSCPSLDAMDVKEIAQEAGYQVEVSWARQWSQNGALDAIFHHFEPPKEGARTLIEFPTDYEGRNVNTLTNRPLNSIQSRRLGTQIREKLQTLLPPYMIPSRIMVLDQMPVNNNGKIDRKELVRRAIVAPKPRSAATRVAPRNEIEAILRDEFEDVLGTEVSVLDNFFDLGGHSLMATKLAARVSRRLDAHISIKDVFDQPVLADLAASIQRESAPHEPIPQRPYTGPAEQSFAQGRLWFLDQLNLGATWYLMPLAIRIRGQLRVAALSAALFALERRHETLRTTFEESDGVGVQIVGEARNSDLRVHDVSTGDDGEYLEVLRREQTVPFDLSSEPGWRVCLVKTGEEDHVLSIVMHHIIYDGWSVDILRGELGQFYSAALRGQDPLLHANPLPIQYRDFAAWQREAKQVEEHQRQLGYWSKQLVDSTPAELLTDLPRPSILSGRAGSVDVTIEGSVYGALQSFCRTRSVTTFVVLLTVFRIAHFRLTAVDDATIGTPIANRNRPELETLVGCFVNTQCMRISIADDDNFEGLVRQVRNVATAAYANQDVPFERIVSALVPGSRNTSRNPLVQLMFAVQSVEDYDQVRLEGLESVMMPGEASTRFDMEFHLVPGDQKLTGSVLYSSDLFEQGTIQNFVDIFQECLRSVLDQPLTPISVLPFSNAISNLESLDLLEMPTSDYPRDRTVVDLFREQAAICPDSIAVKDSSSQLTYAQLDEQSDRVAAWLHERHMPAESLVGVLSPRSCETIIAYFGIMKANLAYLPLDVYAPDARLAAILDTVEGERLLLLGAGVPQPGIQIPRLSTAYIAEALSHATTVDVTSIPQPSATSLAYVIFTSGSTGKPKGVMIEHRGIVRLVRDTNVNVFPESGSALPVSHFSNLAWDAATWEIYTAVLNGGTVVCIDRDTMLDIAALNSTFRKENVRAAFFTPAFLKQCLAETPELVANLEILHTAGDRLDPGDANLAGKTAKGGIFNVLGHTENTAYSTFYPVVGEETFVNGVPVGRGISNSHAYIIDRHQKLVPAGVMGELILTGDGVARGYTDSALNKDRFVYIDINGKSTWSYRTGDKARYRPRDGQLEFFGRMDQMVKIRGVRIEPGEVELTLLDHKSVLAATVVVRRPPNGDPEMIAFITIDAEDDVQTHKAIYKHLQGILPAYMIPSHLVILDQMPVTDNGKVDRKDLALRAQTVQKRRSTAARVPPRDEVEAVLCEEYSNLLEVEVGITDGFFDLGGHSLLATKLAARLSRQLNTRVSVKDVFDQPILADLADIIRRGSHRHDPIPATPYTGPVEQSFAQGRLWFLEQLNLGASWYLMPFAIRMRGPLQTKALAVALNALVHRHEALRTTFEDHDGVGVQVIQPKSSQDLRIIDLSDAVDDTAYLAALKREQTTAFDLTSEPGWRVSLLRLGDDDYILSIVMHHIISDGWTVDVLRQELGQFYSAAIRGQEPLSQAKSLPIQYRDFAVWQRQENQIKEQAKQLKYWSQQLADSTPCEFLTDLPRPSILSGEADAVPMVIDGTVYQLLTDFCRTHQVTSFSVLLAAFRTAHYRLTGTLDATVGTPIANRNRPELEGLIGFFVNTQCMRMAISETETFESLVQQVRLTTTEAFANQDVPFEQIVSTLLPGSRDTSRNPLVQVMFALQSQQDLGRIQLEGMTDEALETPLSTRLDLEVHLFQEVGKLSGSLLYSTDLFEVETIRGIVDVFLEILRRGLEQPKQRLMAMPITDGITKLRDQGLLTVAKPAYPRESSVIDLFRQQVAAAPDAIAVWDSSSTLTYADLDGQSNKLAHWLCQRNMAPETLVAVFAPRSCLTIVAFLGVLKANLAYLPLDVNAPAARIEAILSAVPGHKLVLVQAHGPELGLTMADTELVQIDEALASSSSGDHEQIHASGPTATSLAYVMFTSGSTGKPKGVMIDHRSIIRLVKNSDVVATLPTPVRMANVSNLAFDISVQEIYTALLNGGTLVCLDYLTLLDSKILYNVFVEAQVNAAMFTPVLLKQCLGNMPAIISRLSVLFNVGDRLDAHDAVAASGLIQDAVYNAYGPTENGMQSTMYKVDVNEPFVNGVPIGRSITNSGAYVMDGNQQLVSPGVMGEIVVTGDGLARGYTDSALDEDRFVHVTIDGEENIKAYRTGDRVRYRPKDFEIEFFGRMDQQVKIRGHRIEPAEVEHALLGHDLVHDAAVVLRKPANQEPEMIAFITSQEDETIEQHESNKQVQGWGEHFDVSRYADIKDLDTSTFGHDFLGWTSMYDGVDIPVNEMKEWLDETTASLLDNRPPGHILEIGAGTGMILSNLGKVDGLQKYVGLDPAPSAAIFVNEAVKSLPSLAGKARVLVGTALDIGSLDKNEIQPELVVINSVAQYFPTSEYLIKVVKAVVEVPSVKRVFFGDIRSQALNRDFLAARAVRALGDNASKEQIREKIAELEESEEELLVDPAFFVSLRSQLPNIKHVEVLPKLMKATNELSSYRYAAVLHISHNEEEQLLIQDIDPTAWVDFAATQKDSQGLRNLLQQGRDDVMIAVGNIPYSKTIVERHIMNSLDQDHVNSLDGTSWISDARSAAAICTSFDAPALTQLAKEEGFRVELSWARQRSQNGALDAVFHRLATDANCERSRVLVHFPTDHQGRQLRTLTNRPLQRAQSRRIESQVFEALQTALPAYMIPSRIIVLPQMPTNANGKVDRKQLARRAQVVAKRKAVSARVAPRNDTEIVLCEEYADILGTEVGITDNFFDMGGHSLMATKLAARLSRRLDTRVTVKEVFDKPVLADLAASIEQGSTPHLPIASSVYSGPVEQSYAQGRLWFLDQFNLNATWYHMSLAMRLLGPLNMDALDVALRALEQRHETLRTTFEAQKDIGVQVVHEAGMKRLKVLDLSDKNEKEHMAVLENEQMRPFTLASEPGWKGHLARLGPTEYILSLVMHHMFSDGWSVDILRQELGQFYSAALRGRDPLSQVKPLPIQYRDFAAWQKEAAQVAEHERQLAYWENQLADSTPGELLTDFPRPQFLSGKAGVIPVTIEGPVYEKLLKFSKERQVTLFSVLLTAFRATHFRLTGAEDATIGTPIANRNRPELEHIIGFFVNTQCMRLLLDTGSTFESLVQHVRSVATDAYSNQDIPFERIVSALLPGSRDASRSPLIQLMFALHSQPDLGNITLEGLEHERLPTSVATRFDMEFHLFQEPNKLSGSILFADELFQPETINSVVTVFQEILRRGLDQPQVSISTMPLTDGLIDLEKLGLLEIESSNFPRDYSVVDVFRQQVAANPNAPAVVDSETSMSYTSLDQKSEQIAAWLHAQGLRPESLICVMAPRSFETIVSLFGILKAGYAYLPLDVNSPAARIQPILSEVEGKRLVLLGSGIDMPQSDRMDVETARIQDILTNTKVERSDPMSRPSATSLAYVIFTSGSTGRPKGVMIEHRNILRLVKQSNVTSQLPQDLRMAHISNLAFDASIWEIFTAILNGGALICIDYFTLLDSQALRTTFEKARVNATLFAPALLKECLNHAPTLFEDLKVLYIGGDRLDATDAAKIQALVKGTVYNAYGPTENTVMSTIYRLTDGESYANGVPIGNAVSSSGAYIMDQKQRLVPPGVMGELVVSGDGLARGYTNSTLNADRFVDIVINDQKARAYRTGDRTRYRPKDGSIEFFGRMDQQVKIRGHRVEPAEVEQAMLGNKAIHDAAVVVQAVDGQETEMIGFVSMASDRFSEGEEEITNQVQEWEDHFESTAYAGIEAIDQATLGRDFTSWTSMYNGNLIDKAEMEEWLDDTMQSLLDKEDARPCAEIGTGTGMVLFNLPKNDGLESYVGIEPSRSAALFVDKAAQDFPGLQGKTQILVGTAEDIKLVKDFHPDVVVINSVAQYFPSRSYLVQIASELIHMTSVKTIFFGDMRSWATNRDFLVSRALYTLGDKATKDQIRQEVARLEENEDELLVDPAFFTSLTSQWPGKVKHVEILPKRMRTSNELSSYRYAAVLHICRDGEGRNRYGRRVHSVEENAWIDFASSGMDRHALVQMLDERRDAKTVAIGNIPHSNTINERHFTTSLDTEGEGIAQDSLDGSAWQSATKAMAARCPCLSVTELVEIGQAAGFRVEVSWARQRSQHGALDVVFHHLEDDRVGRVLINFPTDFERLPPSTGLTSRPLQRIQNRRFESQIREQLQTLLPPYMVPSRIVVLERMPLNANSKVDRKELARKARTLQTIKPSATRVAPRNDIEAVLCDEFQAVLGVTVGVMDNFFELGGHSLMATKLAARLSRRLDTRVSVKDIFNQPILQDLADVVQTGSAPHEAIPSTPYSGPVEQSFSQGRLWFLDQLNLNASWYHMPLASRLRGPLRIEALQSALATIEARHESLRTTFEEQDGVPVQIVRAARNKQLRIIDVSGTEDAYLAALKQEQDAAFDLTAEPGWRVALLRLGPDDHVLSIVMHHIISDGWSVDILRQELGQLYSNASSQPAPLPIQYRDFAIWQKQDSQIAEHQKQLNYWKRQLVNSKPAELLADFTRPKALSGDADVIPIEIDDQVYQNLRSFCRARHVTSFVALLAAFRAAHYRLTGAEDATIGSPIANRNRPELEGLIGCFVNTQCLRIPVKSEDTFDTLVKQARETATEAQDNQDVPFERIVSSMVASSRDTSRNPLVQVMFAVHSQHDLGNIRLEGVEGKPVSMAASTRFDAEMHLFEDQGMLGGNVVFSKDLFESETIRSVVAVFQETLRRGLANPHANLATLPLTDGLPSLRSLCLQVNQPDYPRDASVIDVFREQVASIPKSIAVIDASSQLTYTELDERSSQLATWLRRQVTVPEELVGVLAPRSCETIIAFLGIIKANLAYLPLDVNAPAGRIETILSSLPGNRLILLGSDTQAVKLHANSVRFTRISDALVESGSPPTEELSTRPTAQSLAYVMFTSGSTGVPKGVMVEHRGITRLVKNSNVVAKQPAAAAIAHLSNIAFDASSWEIYAPLLNGGTVVCIDYYTTIDIKALEAVFKQHHIRGAMLPPALLKQCLVSAPTMISSLEILFAAGDRLSSQDAILARRAVGSGVYNAYGPTENTVLSTIHNIGENEAFSNGVPIGNAVSNSGAFVMDQNQQLVSAGVIGELVVTGDGLARGYTDSKLRVDRFIYITLDGNRVRAYRTGDRVRHRPKDGQIEFFGRMDQQIKIRGHRIEPAEVEQALARDPAISDSAVITQLTDEEEPELVAFFSLKGNANGTNGVNGVSDQEKIDGDEQHALLMENKIRHNLQALLPTYMIPSRIIHVDQLPVNANGKIDRNELAVRAQATPRTSSVSTYVAPRNDIETIICKEFADILSVRVGITDNFFDLGGHSLIATKLAARLSRRLDTRVSVRDVFDTPVVGQLAASIQQGSTPHEAIPALSHSGPVQQSFAQGRLWFLDRFNLNAAWYIMPFGVRLRGPLRVDALQTALRALEERHELLRTTFEEQDGVGMQIVHSPRMRDICVVDISGANEDLAKLKEEQQAPFNLSTEVAWRVALFKAGENHHILSIVMHHIISDGWSVDIFQQELAQFYSVAVRGHDPLSQVKPLPIHYRDFAVWQRQDKQVAVHESQLQYWIEQLADSTPAEILSDFNRPEVLSGEAGTVPIVIEDEVYEKLSLFCRNHQVTSFVVLLAAFRVAHYRLTGAEDATIGTPIANRNRPELEDLIGFFVNTQCMRIALEEHDNFLSVVRRVRSTAASAFENQDVPFERLVSALLPGSRDASRNPLVQLMFVVHSQRNLGKLQLEGLEGEPTPYTATTRFDVEFHLFEQDKGLAGNVVFAADLFEAATIRSVVEVFHEILRRGLDQPDIAISTMPLVDGLAALNSRNLPAVEDIEPDFATEASVVDVFQTQVVANPDALAVTDTSTKLTYAELDQQSDHVAAWLSKQKLPAESIVVVLAPRSSETIVACIGILKANLAYLPMDSNVPEARRQAILSEIPGEKFVLLGAGVPIPDNKTADVRMVFISDIVASKTDKSYSPGTRPSASSLAYVIFTSGSTGRPKGVMVEHRGVISLVKQNASRIPQSLRMAHVSNLAFDASVWEIFTTLLNGGTLFCISYFTVLDSKALSAAFSDHRINITLLPPALLKQCLADAPSVLSSLESLYIGGDRLDGADATKVKDLVKGKAYNAYGPTENSVMSTIYTIEHETFANGVPIGTSLGPKSKAYIMDQDQQLVPAGVMGELVVAGDGLARGYTDPSLNTGRFIHITIDGKQVQAYRTGDRVRYRPRDYQIEFFGRLDQQIKIRGHRIEPAEVEQALLSDSSINDAVVVSAQNKEGLEMVGYITTQAAQSVDKEEASNKVQEWEAHFDSTAYANIGGIDRDALGQDFLSWTSMYDGSLIPREEMQEWLNDTMRSLLDNQPPGKVLEIGTGTGMVLFNLGKVEGLQSYAGLEPSRSVTAWVNKAIETFPSLAGSARVHVGTAEDISSIDGLRSDLVVINSVAQYFPSREYLAELTANLIRLPGVKRIFFGDMRTYATNKDFLVARAVHTLGSNASKAMVRQQVAKLEDDEEELLVDPAFFTSLSDQFPDEIKHVEILPKRMAATNELSSYRYAAVIHVGGHQMPNGEDEDKQWAVKDINPKAWVDFAGTRMDRQALLQLLQDRQRGDDVVAVSNIPYSKTIMERHLSQSLDDDEDGTSAVDGTAWISRTQSRAKECPALSVADLIEIGKGIGFEVEASWARQHSQRGGLDAVFHRFEPPRHSGHVMFRFPTEHKGRSSSSLTNRPLHLLQSRRLEAKVRERLQSLLPPYMIPSRITLLDQMPLTSNGKVDRKKLARQARVIPRSAASTLDFVAPRTEIEVVLCEEFTDLLGVKVGITDNFFELGGHSLLATKLSARLSRRLDAGITVKQVFDQPVLADLAASILQGSSRHRSIPSLPYEGPVEQSFAQGRLWFLDQFNIDALWYLIPFALRMRGPLQVDALAAALVALEERHESLRTTFEERDGVGIQVVQPLRTTKDIRIIDVSGMRDDDAYLEPLQKEQQTPFDLASEPGWRVALLKLGKDDHILSIVMHHIISDGWSTEVLQRELGQFYLAAKSGKAPLSQVAPLPIQYRDFAVWQRQEEQVAESQRQLDYWKKQLADSSPAELLADYTRPNVLSGEAGSVSFVINDSVYKSLVSFCRSRQVTTFTTLLAAFRAAHYRMTGSDDATIGTPIANRNRPELENLIGCFVNTQCMRITIGDDETFESLVQQVRSTTATAFENQDVPFERIVSTLSAGSRDTSRNPLVQLLFAVHSQQGLGRIQLDGVVDEPVLSTVSTRFDLEFHAFQEADRLNGSVMFATDLFQPETIQGFVAVVEEVLQRGLEQPQSPIATMPLAEGIAQLRDAGALQMPKSDYPRNASLVDVFQQQAMASPSTVAVTDSTSKLTYAELDRLSDQAASYLRRQQLPAETMVAVLAPRSCETIIAFLAILKANLAYMPLDVNTPSARMEAIISSVPGRRLILVGSGVRHADINVPNAKTMLISDTVTGTDAIGTPEPLVVRPSATSLAYVIFTSGSTGKPKGVMVEHRAIMRLVKDSNVVTHMPPATRMAHVTNIAFDVSLFEMCATLLNGGTLVCIDYLTLLDSTMLRETFEREQVRAAIFPPALLRQCLVNMPDAIGMLEAVYVAGDRFHSRDARATQALAGPRVYNAYGPTENAILSTIYNIDKHDPYVNGVPIGSAVSNSGAYVMDRNQQLLPPGVMGELVVTGEGVARGYTDASLDTDRFVTVTIDGQRQRAYRTGDRVRYRPKGFQIEFFGRLDQQAKIRGHRVELGEVEHALLSENSVTDAAVVLRTMEEEDPQLVAFVTTDHEYRSGSSNEEEDPYATQAAGDMRKRLRSLLPYYMVPSRVTILRQMPLNANGKVDRKDLARRAQMTPTASSSGPVHVAPRNETEAAICDEFETILGVKVGITDNFFELGGHSLLATKLAARLSRRMGLRISVKDLFDDPVPVSLAGKLEQQQGFSGEDESSTVGIVPFQLLPAEMSREIIQRDVVPQIENGHSTPLDMYPATQTQIFFLHDKATGHPATPPLFSLDFPETADCRRLASACAALVQHFDIFRTVFVSRGGRFYQVVLAHLDVPVEVIETEQELDEVALALHEADKQQPLRLGRAMLRIAILKRPGAKMRLVLRMSHSLYDGLSLEHIVNALHALYSDKHLAQAPKFGLYMHHMASRRAEGYNFWRSILQGSSMTSLKRSVGALEAMTPSAGTWQTSKSIRIPPAALKNGITQATLFTAAVSLLLAKHTKSTDVVFGRVVSGRQDLSINCQDIVGPCINEVPVRVRIDEGDDMGGLLRAIQDQYTSSFRHETLGLQEVKENCTDWTDATKEFSCCIAFQNLNLHPEAEIEGQQIRLEGLPAKDQARQANGHAPNGTNGTNGTNGTNGANGTNGTNGTNGTHANGINGSNGVNGRDSNVVSAAGDQAPVHDLDIVGIPEPDGSVKIGIGASRQILGEKVVGSMLNELCETMLALSRT</sequence>